<organism>
    <name type="scientific">Homo sapiens</name>
    <name type="common">Human</name>
    <dbReference type="NCBI Taxonomy" id="9606"/>
    <lineage>
        <taxon>Eukaryota</taxon>
        <taxon>Metazoa</taxon>
        <taxon>Chordata</taxon>
        <taxon>Craniata</taxon>
        <taxon>Vertebrata</taxon>
        <taxon>Euteleostomi</taxon>
        <taxon>Mammalia</taxon>
        <taxon>Eutheria</taxon>
        <taxon>Euarchontoglires</taxon>
        <taxon>Primates</taxon>
        <taxon>Haplorrhini</taxon>
        <taxon>Catarrhini</taxon>
        <taxon>Hominidae</taxon>
        <taxon>Homo</taxon>
    </lineage>
</organism>
<feature type="chain" id="PRO_0000251711" description="Transmembrane protein 98">
    <location>
        <begin position="1"/>
        <end position="226"/>
    </location>
</feature>
<feature type="topological domain" description="Cytoplasmic" evidence="5">
    <location>
        <begin position="1"/>
        <end position="3"/>
    </location>
</feature>
<feature type="transmembrane region" description="Helical" evidence="2">
    <location>
        <begin position="4"/>
        <end position="24"/>
    </location>
</feature>
<feature type="topological domain" description="Extracellular" evidence="5">
    <location>
        <begin position="25"/>
        <end position="226"/>
    </location>
</feature>
<feature type="region of interest" description="Required for interaction with MYRF" evidence="1">
    <location>
        <begin position="1"/>
        <end position="88"/>
    </location>
</feature>
<feature type="region of interest" description="Disordered" evidence="3">
    <location>
        <begin position="207"/>
        <end position="226"/>
    </location>
</feature>
<feature type="sequence variant" id="VAR_051451" description="In dbSNP:rs35124349.">
    <original>W</original>
    <variation>R</variation>
    <location>
        <position position="83"/>
    </location>
</feature>
<feature type="sequence variant" id="VAR_071807" description="In NNO4; dbSNP:rs587777690." evidence="4">
    <original>A</original>
    <variation>P</variation>
    <location>
        <position position="193"/>
    </location>
</feature>
<feature type="sequence variant" id="VAR_081643" description="In NNO4; dbSNP:rs869312733." evidence="6">
    <original>H</original>
    <variation>P</variation>
    <location>
        <position position="196"/>
    </location>
</feature>
<feature type="sequence conflict" description="In Ref. 2; CAB56018." evidence="7" ref="2">
    <original>L</original>
    <variation>P</variation>
    <location>
        <position position="104"/>
    </location>
</feature>
<feature type="sequence conflict" description="In Ref. 2; CAB56018." evidence="7" ref="2">
    <original>H</original>
    <variation>R</variation>
    <location>
        <position position="196"/>
    </location>
</feature>
<name>TMM98_HUMAN</name>
<evidence type="ECO:0000250" key="1">
    <source>
        <dbReference type="UniProtKB" id="Q91X86"/>
    </source>
</evidence>
<evidence type="ECO:0000255" key="2"/>
<evidence type="ECO:0000256" key="3">
    <source>
        <dbReference type="SAM" id="MobiDB-lite"/>
    </source>
</evidence>
<evidence type="ECO:0000269" key="4">
    <source>
    </source>
</evidence>
<evidence type="ECO:0000269" key="5">
    <source>
    </source>
</evidence>
<evidence type="ECO:0000269" key="6">
    <source>
    </source>
</evidence>
<evidence type="ECO:0000305" key="7"/>
<gene>
    <name type="primary">TMEM98</name>
    <name type="ORF">UNQ536/PRO1079</name>
</gene>
<sequence length="226" mass="24611">METVVIVAIGVLATIFLASFAALVLVCRQRYCRPRDLLQRYDSKPIVDLIGAMETQSEPSELELDDVVITNPHIEAILENEDWIEDASGLMSHCIAILKICHTLTEKLVAMTMGSGAKMKTSASVSDIIVVAKRISPRVDDVVKSMYPPLDPKLLDARTTALLLSVSHLVLVTRNACHLTGGLDWIDQSLSAAEEHLEVLREAALASEPDKGLPGPEGFLQEQSAI</sequence>
<dbReference type="EMBL" id="AF132000">
    <property type="protein sequence ID" value="AAD22105.1"/>
    <property type="molecule type" value="mRNA"/>
</dbReference>
<dbReference type="EMBL" id="AL117619">
    <property type="protein sequence ID" value="CAB56018.1"/>
    <property type="molecule type" value="mRNA"/>
</dbReference>
<dbReference type="EMBL" id="AY358573">
    <property type="protein sequence ID" value="AAQ88936.1"/>
    <property type="molecule type" value="mRNA"/>
</dbReference>
<dbReference type="EMBL" id="CR457125">
    <property type="protein sequence ID" value="CAG33406.1"/>
    <property type="molecule type" value="mRNA"/>
</dbReference>
<dbReference type="EMBL" id="CH471147">
    <property type="protein sequence ID" value="EAW80219.1"/>
    <property type="molecule type" value="Genomic_DNA"/>
</dbReference>
<dbReference type="EMBL" id="CH471147">
    <property type="protein sequence ID" value="EAW80220.1"/>
    <property type="molecule type" value="Genomic_DNA"/>
</dbReference>
<dbReference type="EMBL" id="BC000526">
    <property type="protein sequence ID" value="AAH00526.1"/>
    <property type="molecule type" value="mRNA"/>
</dbReference>
<dbReference type="CCDS" id="CCDS11274.1"/>
<dbReference type="PIR" id="T17328">
    <property type="entry name" value="T17328"/>
</dbReference>
<dbReference type="RefSeq" id="NP_001028676.1">
    <property type="nucleotide sequence ID" value="NM_001033504.2"/>
</dbReference>
<dbReference type="RefSeq" id="NP_001288675.1">
    <property type="nucleotide sequence ID" value="NM_001301746.2"/>
</dbReference>
<dbReference type="RefSeq" id="NP_056359.2">
    <property type="nucleotide sequence ID" value="NM_015544.3"/>
</dbReference>
<dbReference type="SMR" id="Q9Y2Y6"/>
<dbReference type="BioGRID" id="117492">
    <property type="interactions" value="24"/>
</dbReference>
<dbReference type="FunCoup" id="Q9Y2Y6">
    <property type="interactions" value="212"/>
</dbReference>
<dbReference type="IntAct" id="Q9Y2Y6">
    <property type="interactions" value="21"/>
</dbReference>
<dbReference type="MINT" id="Q9Y2Y6"/>
<dbReference type="STRING" id="9606.ENSP00000463245"/>
<dbReference type="iPTMnet" id="Q9Y2Y6"/>
<dbReference type="PhosphoSitePlus" id="Q9Y2Y6"/>
<dbReference type="SwissPalm" id="Q9Y2Y6"/>
<dbReference type="BioMuta" id="TMEM98"/>
<dbReference type="DMDM" id="74735246"/>
<dbReference type="jPOST" id="Q9Y2Y6"/>
<dbReference type="MassIVE" id="Q9Y2Y6"/>
<dbReference type="PaxDb" id="9606-ENSP00000463245"/>
<dbReference type="PeptideAtlas" id="Q9Y2Y6"/>
<dbReference type="ProteomicsDB" id="85937"/>
<dbReference type="Pumba" id="Q9Y2Y6"/>
<dbReference type="Antibodypedia" id="52106">
    <property type="antibodies" value="42 antibodies from 12 providers"/>
</dbReference>
<dbReference type="DNASU" id="26022"/>
<dbReference type="Ensembl" id="ENST00000394642.7">
    <property type="protein sequence ID" value="ENSP00000378138.3"/>
    <property type="gene ID" value="ENSG00000006042.12"/>
</dbReference>
<dbReference type="Ensembl" id="ENST00000579849.6">
    <property type="protein sequence ID" value="ENSP00000463245.1"/>
    <property type="gene ID" value="ENSG00000006042.12"/>
</dbReference>
<dbReference type="GeneID" id="26022"/>
<dbReference type="KEGG" id="hsa:26022"/>
<dbReference type="MANE-Select" id="ENST00000579849.6">
    <property type="protein sequence ID" value="ENSP00000463245.1"/>
    <property type="RefSeq nucleotide sequence ID" value="NM_015544.3"/>
    <property type="RefSeq protein sequence ID" value="NP_056359.2"/>
</dbReference>
<dbReference type="UCSC" id="uc002hhq.4">
    <property type="organism name" value="human"/>
</dbReference>
<dbReference type="AGR" id="HGNC:24529"/>
<dbReference type="CTD" id="26022"/>
<dbReference type="DisGeNET" id="26022"/>
<dbReference type="GeneCards" id="TMEM98"/>
<dbReference type="HGNC" id="HGNC:24529">
    <property type="gene designation" value="TMEM98"/>
</dbReference>
<dbReference type="HPA" id="ENSG00000006042">
    <property type="expression patterns" value="Tissue enhanced (choroid)"/>
</dbReference>
<dbReference type="MalaCards" id="TMEM98"/>
<dbReference type="MIM" id="615949">
    <property type="type" value="gene"/>
</dbReference>
<dbReference type="MIM" id="615972">
    <property type="type" value="phenotype"/>
</dbReference>
<dbReference type="neXtProt" id="NX_Q9Y2Y6"/>
<dbReference type="OpenTargets" id="ENSG00000006042"/>
<dbReference type="Orphanet" id="35612">
    <property type="disease" value="Nanophthalmos"/>
</dbReference>
<dbReference type="PharmGKB" id="PA142670747"/>
<dbReference type="VEuPathDB" id="HostDB:ENSG00000006042"/>
<dbReference type="eggNOG" id="ENOG502QT8U">
    <property type="taxonomic scope" value="Eukaryota"/>
</dbReference>
<dbReference type="GeneTree" id="ENSGT00390000012062"/>
<dbReference type="InParanoid" id="Q9Y2Y6"/>
<dbReference type="OMA" id="HMEVIRE"/>
<dbReference type="OrthoDB" id="5978425at2759"/>
<dbReference type="PAN-GO" id="Q9Y2Y6">
    <property type="GO annotations" value="1 GO annotation based on evolutionary models"/>
</dbReference>
<dbReference type="PhylomeDB" id="Q9Y2Y6"/>
<dbReference type="TreeFam" id="TF336444"/>
<dbReference type="PathwayCommons" id="Q9Y2Y6"/>
<dbReference type="SignaLink" id="Q9Y2Y6"/>
<dbReference type="BioGRID-ORCS" id="26022">
    <property type="hits" value="10 hits in 1152 CRISPR screens"/>
</dbReference>
<dbReference type="ChiTaRS" id="TMEM98">
    <property type="organism name" value="human"/>
</dbReference>
<dbReference type="GeneWiki" id="TMEM98"/>
<dbReference type="GenomeRNAi" id="26022"/>
<dbReference type="Pharos" id="Q9Y2Y6">
    <property type="development level" value="Tbio"/>
</dbReference>
<dbReference type="PRO" id="PR:Q9Y2Y6"/>
<dbReference type="Proteomes" id="UP000005640">
    <property type="component" value="Chromosome 17"/>
</dbReference>
<dbReference type="RNAct" id="Q9Y2Y6">
    <property type="molecule type" value="protein"/>
</dbReference>
<dbReference type="Bgee" id="ENSG00000006042">
    <property type="expression patterns" value="Expressed in ileal mucosa and 163 other cell types or tissues"/>
</dbReference>
<dbReference type="ExpressionAtlas" id="Q9Y2Y6">
    <property type="expression patterns" value="baseline and differential"/>
</dbReference>
<dbReference type="GO" id="GO:0005783">
    <property type="term" value="C:endoplasmic reticulum"/>
    <property type="evidence" value="ECO:0000314"/>
    <property type="project" value="LIFEdb"/>
</dbReference>
<dbReference type="GO" id="GO:0005789">
    <property type="term" value="C:endoplasmic reticulum membrane"/>
    <property type="evidence" value="ECO:0007669"/>
    <property type="project" value="UniProtKB-SubCell"/>
</dbReference>
<dbReference type="GO" id="GO:0070062">
    <property type="term" value="C:extracellular exosome"/>
    <property type="evidence" value="ECO:0000314"/>
    <property type="project" value="UniProtKB"/>
</dbReference>
<dbReference type="GO" id="GO:0005615">
    <property type="term" value="C:extracellular space"/>
    <property type="evidence" value="ECO:0000314"/>
    <property type="project" value="UniProtKB"/>
</dbReference>
<dbReference type="GO" id="GO:0005886">
    <property type="term" value="C:plasma membrane"/>
    <property type="evidence" value="ECO:0000314"/>
    <property type="project" value="UniProtKB"/>
</dbReference>
<dbReference type="GO" id="GO:0031642">
    <property type="term" value="P:negative regulation of myelination"/>
    <property type="evidence" value="ECO:0000250"/>
    <property type="project" value="UniProtKB"/>
</dbReference>
<dbReference type="GO" id="GO:0048715">
    <property type="term" value="P:negative regulation of oligodendrocyte differentiation"/>
    <property type="evidence" value="ECO:0000250"/>
    <property type="project" value="UniProtKB"/>
</dbReference>
<dbReference type="GO" id="GO:1900181">
    <property type="term" value="P:negative regulation of protein localization to nucleus"/>
    <property type="evidence" value="ECO:0007669"/>
    <property type="project" value="Ensembl"/>
</dbReference>
<dbReference type="GO" id="GO:0010955">
    <property type="term" value="P:negative regulation of protein processing"/>
    <property type="evidence" value="ECO:0007669"/>
    <property type="project" value="Ensembl"/>
</dbReference>
<dbReference type="GO" id="GO:0045063">
    <property type="term" value="P:T-helper 1 cell differentiation"/>
    <property type="evidence" value="ECO:0000250"/>
    <property type="project" value="UniProtKB"/>
</dbReference>
<dbReference type="FunFam" id="1.20.1410.10:FF:000003">
    <property type="entry name" value="Transmembrane protein 98"/>
    <property type="match status" value="1"/>
</dbReference>
<dbReference type="Gene3D" id="1.20.1410.10">
    <property type="entry name" value="I/LWEQ domain"/>
    <property type="match status" value="1"/>
</dbReference>
<dbReference type="InterPro" id="IPR029668">
    <property type="entry name" value="TMEM98"/>
</dbReference>
<dbReference type="PANTHER" id="PTHR32510">
    <property type="entry name" value="TRANSMEMBRANE PROTEIN 98"/>
    <property type="match status" value="1"/>
</dbReference>
<dbReference type="PANTHER" id="PTHR32510:SF4">
    <property type="entry name" value="TRANSMEMBRANE PROTEIN 98"/>
    <property type="match status" value="1"/>
</dbReference>
<protein>
    <recommendedName>
        <fullName>Transmembrane protein 98</fullName>
    </recommendedName>
    <alternativeName>
        <fullName>Protein TADA1</fullName>
    </alternativeName>
</protein>
<proteinExistence type="evidence at protein level"/>
<accession>Q9Y2Y6</accession>
<accession>E1P631</accession>
<accession>Q9UFK2</accession>
<comment type="function">
    <text evidence="1">Functions as a negative regulator of MYRF in oligodendrocyte differentiation and myelination. Interacts with the C-terminal of MYRF inhibiting MYRF self-cleavage and N-fragment nuclear translocation. The secreted form promotes differentiation of T helper 1 cells (Th1).</text>
</comment>
<comment type="subunit">
    <text evidence="1">Interacts (via N-terminal region) with MYRF; the interaction inhibits MYRF self-cleavage.</text>
</comment>
<comment type="interaction">
    <interactant intactId="EBI-7333781">
        <id>Q9Y2Y6</id>
    </interactant>
    <interactant intactId="EBI-1054481">
        <id>P54709</id>
        <label>ATP1B3</label>
    </interactant>
    <organismsDiffer>false</organismsDiffer>
    <experiments>3</experiments>
</comment>
<comment type="interaction">
    <interactant intactId="EBI-7333781">
        <id>Q9Y2Y6</id>
    </interactant>
    <interactant intactId="EBI-17565645">
        <id>P08034</id>
        <label>GJB1</label>
    </interactant>
    <organismsDiffer>false</organismsDiffer>
    <experiments>3</experiments>
</comment>
<comment type="interaction">
    <interactant intactId="EBI-7333781">
        <id>Q9Y2Y6</id>
    </interactant>
    <interactant intactId="EBI-712073">
        <id>Q8NBJ4</id>
        <label>GOLM1</label>
    </interactant>
    <organismsDiffer>false</organismsDiffer>
    <experiments>3</experiments>
</comment>
<comment type="interaction">
    <interactant intactId="EBI-7333781">
        <id>Q9Y2Y6</id>
    </interactant>
    <interactant intactId="EBI-17263240">
        <id>P15941-11</id>
        <label>MUC1</label>
    </interactant>
    <organismsDiffer>false</organismsDiffer>
    <experiments>3</experiments>
</comment>
<comment type="interaction">
    <interactant intactId="EBI-7333781">
        <id>Q9Y2Y6</id>
    </interactant>
    <interactant intactId="EBI-347996">
        <id>O43765</id>
        <label>SGTA</label>
    </interactant>
    <organismsDiffer>false</organismsDiffer>
    <experiments>3</experiments>
</comment>
<comment type="interaction">
    <interactant intactId="EBI-7333781">
        <id>Q9Y2Y6</id>
    </interactant>
    <interactant intactId="EBI-1211440">
        <id>P27105</id>
        <label>STOM</label>
    </interactant>
    <organismsDiffer>false</organismsDiffer>
    <experiments>3</experiments>
</comment>
<comment type="interaction">
    <interactant intactId="EBI-7333781">
        <id>Q9Y2Y6</id>
    </interactant>
    <interactant intactId="EBI-18194029">
        <id>Q96L08</id>
        <label>SUSD3</label>
    </interactant>
    <organismsDiffer>false</organismsDiffer>
    <experiments>3</experiments>
</comment>
<comment type="subcellular location">
    <subcellularLocation>
        <location evidence="5">Cell membrane</location>
        <topology evidence="5">Single-pass type II membrane protein</topology>
    </subcellularLocation>
    <subcellularLocation>
        <location evidence="5">Secreted</location>
    </subcellularLocation>
    <subcellularLocation>
        <location evidence="5">Secreted</location>
        <location evidence="5">Extracellular exosome</location>
    </subcellularLocation>
    <subcellularLocation>
        <location evidence="1">Endoplasmic reticulum membrane</location>
        <topology evidence="5">Single-pass type II membrane protein</topology>
    </subcellularLocation>
    <text evidence="5">Secreted by exosomes through a non-classical pathway.</text>
</comment>
<comment type="tissue specificity">
    <text evidence="4 5">Widely expressed with high expression in the ovary, pancreas and prostate (PubMed:25946230). Expressed in the eye, particularly in corneal endothelium, iris, ciliary body, sclera, optic nerve, optic nerve head, and retina (PubMed:24852644). Expressed by activated peripheral blood mononuclear cells (PubMed:25946230).</text>
</comment>
<comment type="disease" evidence="4 6">
    <disease id="DI-04209">
        <name>Nanophthalmos 4</name>
        <acronym>NNO4</acronym>
        <description>A rare disorder of eye development characterized by extreme hyperopia (farsightedness) and small functional eyes. The cornea and lens are normal in size and shape. Hyperopia occurs because insufficient growth along the visual axis places these lensing components too close to the retina. Nanophthalmic eyes show considerable thickening of both the choroidal vascular bed and scleral coat, which provide nutritive and structural support for the retina.</description>
        <dbReference type="MIM" id="615972"/>
    </disease>
    <text>The disease is caused by variants affecting the gene represented in this entry.</text>
</comment>
<comment type="similarity">
    <text evidence="7">Belongs to the TMEM98 family.</text>
</comment>
<keyword id="KW-1003">Cell membrane</keyword>
<keyword id="KW-0225">Disease variant</keyword>
<keyword id="KW-0256">Endoplasmic reticulum</keyword>
<keyword id="KW-0472">Membrane</keyword>
<keyword id="KW-1267">Proteomics identification</keyword>
<keyword id="KW-1185">Reference proteome</keyword>
<keyword id="KW-0964">Secreted</keyword>
<keyword id="KW-0812">Transmembrane</keyword>
<keyword id="KW-1133">Transmembrane helix</keyword>
<reference key="1">
    <citation type="submission" date="1999-02" db="EMBL/GenBank/DDBJ databases">
        <authorList>
            <person name="Teramoto T."/>
        </authorList>
    </citation>
    <scope>NUCLEOTIDE SEQUENCE [MRNA]</scope>
</reference>
<reference key="2">
    <citation type="journal article" date="2001" name="Genome Res.">
        <title>Towards a catalog of human genes and proteins: sequencing and analysis of 500 novel complete protein coding human cDNAs.</title>
        <authorList>
            <person name="Wiemann S."/>
            <person name="Weil B."/>
            <person name="Wellenreuther R."/>
            <person name="Gassenhuber J."/>
            <person name="Glassl S."/>
            <person name="Ansorge W."/>
            <person name="Boecher M."/>
            <person name="Bloecker H."/>
            <person name="Bauersachs S."/>
            <person name="Blum H."/>
            <person name="Lauber J."/>
            <person name="Duesterhoeft A."/>
            <person name="Beyer A."/>
            <person name="Koehrer K."/>
            <person name="Strack N."/>
            <person name="Mewes H.-W."/>
            <person name="Ottenwaelder B."/>
            <person name="Obermaier B."/>
            <person name="Tampe J."/>
            <person name="Heubner D."/>
            <person name="Wambutt R."/>
            <person name="Korn B."/>
            <person name="Klein M."/>
            <person name="Poustka A."/>
        </authorList>
    </citation>
    <scope>NUCLEOTIDE SEQUENCE [LARGE SCALE MRNA]</scope>
    <source>
        <tissue>Brain</tissue>
    </source>
</reference>
<reference key="3">
    <citation type="journal article" date="2003" name="Genome Res.">
        <title>The secreted protein discovery initiative (SPDI), a large-scale effort to identify novel human secreted and transmembrane proteins: a bioinformatics assessment.</title>
        <authorList>
            <person name="Clark H.F."/>
            <person name="Gurney A.L."/>
            <person name="Abaya E."/>
            <person name="Baker K."/>
            <person name="Baldwin D.T."/>
            <person name="Brush J."/>
            <person name="Chen J."/>
            <person name="Chow B."/>
            <person name="Chui C."/>
            <person name="Crowley C."/>
            <person name="Currell B."/>
            <person name="Deuel B."/>
            <person name="Dowd P."/>
            <person name="Eaton D."/>
            <person name="Foster J.S."/>
            <person name="Grimaldi C."/>
            <person name="Gu Q."/>
            <person name="Hass P.E."/>
            <person name="Heldens S."/>
            <person name="Huang A."/>
            <person name="Kim H.S."/>
            <person name="Klimowski L."/>
            <person name="Jin Y."/>
            <person name="Johnson S."/>
            <person name="Lee J."/>
            <person name="Lewis L."/>
            <person name="Liao D."/>
            <person name="Mark M.R."/>
            <person name="Robbie E."/>
            <person name="Sanchez C."/>
            <person name="Schoenfeld J."/>
            <person name="Seshagiri S."/>
            <person name="Simmons L."/>
            <person name="Singh J."/>
            <person name="Smith V."/>
            <person name="Stinson J."/>
            <person name="Vagts A."/>
            <person name="Vandlen R.L."/>
            <person name="Watanabe C."/>
            <person name="Wieand D."/>
            <person name="Woods K."/>
            <person name="Xie M.-H."/>
            <person name="Yansura D.G."/>
            <person name="Yi S."/>
            <person name="Yu G."/>
            <person name="Yuan J."/>
            <person name="Zhang M."/>
            <person name="Zhang Z."/>
            <person name="Goddard A.D."/>
            <person name="Wood W.I."/>
            <person name="Godowski P.J."/>
            <person name="Gray A.M."/>
        </authorList>
    </citation>
    <scope>NUCLEOTIDE SEQUENCE [LARGE SCALE MRNA]</scope>
</reference>
<reference key="4">
    <citation type="submission" date="2004-06" db="EMBL/GenBank/DDBJ databases">
        <title>Cloning of human full open reading frames in Gateway(TM) system entry vector (pDONR201).</title>
        <authorList>
            <person name="Ebert L."/>
            <person name="Schick M."/>
            <person name="Neubert P."/>
            <person name="Schatten R."/>
            <person name="Henze S."/>
            <person name="Korn B."/>
        </authorList>
    </citation>
    <scope>NUCLEOTIDE SEQUENCE [LARGE SCALE MRNA]</scope>
</reference>
<reference key="5">
    <citation type="submission" date="2005-09" db="EMBL/GenBank/DDBJ databases">
        <authorList>
            <person name="Mural R.J."/>
            <person name="Istrail S."/>
            <person name="Sutton G.G."/>
            <person name="Florea L."/>
            <person name="Halpern A.L."/>
            <person name="Mobarry C.M."/>
            <person name="Lippert R."/>
            <person name="Walenz B."/>
            <person name="Shatkay H."/>
            <person name="Dew I."/>
            <person name="Miller J.R."/>
            <person name="Flanigan M.J."/>
            <person name="Edwards N.J."/>
            <person name="Bolanos R."/>
            <person name="Fasulo D."/>
            <person name="Halldorsson B.V."/>
            <person name="Hannenhalli S."/>
            <person name="Turner R."/>
            <person name="Yooseph S."/>
            <person name="Lu F."/>
            <person name="Nusskern D.R."/>
            <person name="Shue B.C."/>
            <person name="Zheng X.H."/>
            <person name="Zhong F."/>
            <person name="Delcher A.L."/>
            <person name="Huson D.H."/>
            <person name="Kravitz S.A."/>
            <person name="Mouchard L."/>
            <person name="Reinert K."/>
            <person name="Remington K.A."/>
            <person name="Clark A.G."/>
            <person name="Waterman M.S."/>
            <person name="Eichler E.E."/>
            <person name="Adams M.D."/>
            <person name="Hunkapiller M.W."/>
            <person name="Myers E.W."/>
            <person name="Venter J.C."/>
        </authorList>
    </citation>
    <scope>NUCLEOTIDE SEQUENCE [LARGE SCALE GENOMIC DNA]</scope>
</reference>
<reference key="6">
    <citation type="journal article" date="2004" name="Genome Res.">
        <title>The status, quality, and expansion of the NIH full-length cDNA project: the Mammalian Gene Collection (MGC).</title>
        <authorList>
            <consortium name="The MGC Project Team"/>
        </authorList>
    </citation>
    <scope>NUCLEOTIDE SEQUENCE [LARGE SCALE MRNA]</scope>
    <source>
        <tissue>Muscle</tissue>
    </source>
</reference>
<reference key="7">
    <citation type="journal article" date="2015" name="J. Interferon Cytokine Res.">
        <title>The Secreted Form of Transmembrane Protein 98 Promotes the Differentiation of T Helper 1 Cells.</title>
        <authorList>
            <person name="Fu W."/>
            <person name="Cheng Y."/>
            <person name="Zhang Y."/>
            <person name="Mo X."/>
            <person name="Li T."/>
            <person name="Liu Y."/>
            <person name="Wang P."/>
            <person name="Pan W."/>
            <person name="Chen Y."/>
            <person name="Xue Y."/>
            <person name="Ma D."/>
            <person name="Zhang Y."/>
            <person name="Han W."/>
        </authorList>
    </citation>
    <scope>TOPOLOGY</scope>
    <scope>SUBCELLULAR LOCATION</scope>
    <scope>TISSUE SPECIFICITY</scope>
</reference>
<reference key="8">
    <citation type="journal article" date="2014" name="JAMA Ophthalmol.">
        <title>Mutation in TMEM98 in a large white kindred with autosomal dominant nanophthalmos linked to 17p12-q12.</title>
        <authorList>
            <person name="Awadalla M.S."/>
            <person name="Burdon K.P."/>
            <person name="Souzeau E."/>
            <person name="Landers J."/>
            <person name="Hewitt A.W."/>
            <person name="Sharma S."/>
            <person name="Craig J.E."/>
        </authorList>
    </citation>
    <scope>TISSUE SPECIFICITY</scope>
    <scope>VARIANT NNO4 PRO-193</scope>
</reference>
<reference key="9">
    <citation type="journal article" date="2015" name="Mol. Vis.">
        <title>Novel TMEM98 mutations in pedigrees with autosomal dominant nanophthalmos.</title>
        <authorList>
            <person name="Khorram D."/>
            <person name="Choi M."/>
            <person name="Roos B.R."/>
            <person name="Stone E.M."/>
            <person name="Kopel T."/>
            <person name="Allen R."/>
            <person name="Alward W.L."/>
            <person name="Scheetz T.E."/>
            <person name="Fingert J.H."/>
        </authorList>
    </citation>
    <scope>VARIANT NNO4 PRO-196</scope>
</reference>